<sequence length="312" mass="35721">MRRKMKLWRRVSGAIKDKLSLITATDEKFTAAVIKATSHNDVSMDIENVQFIYRYIQSNPSSFKPIIRAVSLRVEHTRNWTVALKCLMLLHGLFFSGIMTVDSIGRLPFDLSGFGRRKSRFSRTGRFNIFVRAYFMFLDERSILYYNKNMIRLEIIVKMQRIVDSLMRIKPIGETPLVIEAMEYVISEVVLINGHICRGFAGFLSDVQSNMLEISSAEADLAMNIVAKSLSQREKLFKYFEFCRGFGVTNAQETSNILRITESQMIVLDKLLHIAPELDWKAAKVTPVTAADMVDLVTSEERSNTPSDFLTF</sequence>
<protein>
    <recommendedName>
        <fullName>Putative clathrin assembly protein At2g01920</fullName>
    </recommendedName>
</protein>
<gene>
    <name type="ordered locus">At2g01920</name>
    <name type="ORF">F23I14.1</name>
</gene>
<name>CAP14_ARATH</name>
<dbReference type="EMBL" id="AC007265">
    <property type="protein sequence ID" value="AAD26976.1"/>
    <property type="molecule type" value="Genomic_DNA"/>
</dbReference>
<dbReference type="EMBL" id="CP002685">
    <property type="protein sequence ID" value="AEC05520.1"/>
    <property type="molecule type" value="Genomic_DNA"/>
</dbReference>
<dbReference type="EMBL" id="DQ056522">
    <property type="protein sequence ID" value="AAY78678.1"/>
    <property type="molecule type" value="mRNA"/>
</dbReference>
<dbReference type="PIR" id="G84430">
    <property type="entry name" value="G84430"/>
</dbReference>
<dbReference type="RefSeq" id="NP_178301.1">
    <property type="nucleotide sequence ID" value="NM_126253.2"/>
</dbReference>
<dbReference type="SMR" id="Q9SHV5"/>
<dbReference type="STRING" id="3702.Q9SHV5"/>
<dbReference type="PaxDb" id="3702-AT2G01920.1"/>
<dbReference type="EnsemblPlants" id="AT2G01920.1">
    <property type="protein sequence ID" value="AT2G01920.1"/>
    <property type="gene ID" value="AT2G01920"/>
</dbReference>
<dbReference type="GeneID" id="814723"/>
<dbReference type="Gramene" id="AT2G01920.1">
    <property type="protein sequence ID" value="AT2G01920.1"/>
    <property type="gene ID" value="AT2G01920"/>
</dbReference>
<dbReference type="KEGG" id="ath:AT2G01920"/>
<dbReference type="Araport" id="AT2G01920"/>
<dbReference type="TAIR" id="AT2G01920">
    <property type="gene designation" value="PICALM9C"/>
</dbReference>
<dbReference type="eggNOG" id="KOG0251">
    <property type="taxonomic scope" value="Eukaryota"/>
</dbReference>
<dbReference type="HOGENOM" id="CLU_057422_0_0_1"/>
<dbReference type="InParanoid" id="Q9SHV5"/>
<dbReference type="OMA" id="YSSICNG"/>
<dbReference type="PhylomeDB" id="Q9SHV5"/>
<dbReference type="PRO" id="PR:Q9SHV5"/>
<dbReference type="Proteomes" id="UP000006548">
    <property type="component" value="Chromosome 2"/>
</dbReference>
<dbReference type="ExpressionAtlas" id="Q9SHV5">
    <property type="expression patterns" value="baseline and differential"/>
</dbReference>
<dbReference type="GO" id="GO:0005905">
    <property type="term" value="C:clathrin-coated pit"/>
    <property type="evidence" value="ECO:0007669"/>
    <property type="project" value="UniProtKB-SubCell"/>
</dbReference>
<dbReference type="GO" id="GO:0030136">
    <property type="term" value="C:clathrin-coated vesicle"/>
    <property type="evidence" value="ECO:0007669"/>
    <property type="project" value="UniProtKB-SubCell"/>
</dbReference>
<dbReference type="GO" id="GO:0005794">
    <property type="term" value="C:Golgi apparatus"/>
    <property type="evidence" value="ECO:0007669"/>
    <property type="project" value="UniProtKB-SubCell"/>
</dbReference>
<dbReference type="GO" id="GO:0005543">
    <property type="term" value="F:phospholipid binding"/>
    <property type="evidence" value="ECO:0007669"/>
    <property type="project" value="InterPro"/>
</dbReference>
<dbReference type="GO" id="GO:0048268">
    <property type="term" value="P:clathrin coat assembly"/>
    <property type="evidence" value="ECO:0007669"/>
    <property type="project" value="InterPro"/>
</dbReference>
<dbReference type="GO" id="GO:0072583">
    <property type="term" value="P:clathrin-dependent endocytosis"/>
    <property type="evidence" value="ECO:0007669"/>
    <property type="project" value="InterPro"/>
</dbReference>
<dbReference type="CDD" id="cd16987">
    <property type="entry name" value="ANTH_N_AP180_plant"/>
    <property type="match status" value="1"/>
</dbReference>
<dbReference type="Gene3D" id="1.25.40.90">
    <property type="match status" value="1"/>
</dbReference>
<dbReference type="InterPro" id="IPR011417">
    <property type="entry name" value="ANTH_dom"/>
</dbReference>
<dbReference type="InterPro" id="IPR048050">
    <property type="entry name" value="ANTH_N_plant"/>
</dbReference>
<dbReference type="InterPro" id="IPR045192">
    <property type="entry name" value="AP180-like"/>
</dbReference>
<dbReference type="InterPro" id="IPR013809">
    <property type="entry name" value="ENTH"/>
</dbReference>
<dbReference type="InterPro" id="IPR008942">
    <property type="entry name" value="ENTH_VHS"/>
</dbReference>
<dbReference type="PANTHER" id="PTHR22951">
    <property type="entry name" value="CLATHRIN ASSEMBLY PROTEIN"/>
    <property type="match status" value="1"/>
</dbReference>
<dbReference type="PANTHER" id="PTHR22951:SF78">
    <property type="entry name" value="ENTH DOMAIN-CONTAINING PROTEIN"/>
    <property type="match status" value="1"/>
</dbReference>
<dbReference type="Pfam" id="PF07651">
    <property type="entry name" value="ANTH"/>
    <property type="match status" value="1"/>
</dbReference>
<dbReference type="SUPFAM" id="SSF48464">
    <property type="entry name" value="ENTH/VHS domain"/>
    <property type="match status" value="1"/>
</dbReference>
<dbReference type="SUPFAM" id="SSF89009">
    <property type="entry name" value="GAT-like domain"/>
    <property type="match status" value="1"/>
</dbReference>
<dbReference type="PROSITE" id="PS50942">
    <property type="entry name" value="ENTH"/>
    <property type="match status" value="1"/>
</dbReference>
<proteinExistence type="evidence at transcript level"/>
<feature type="chain" id="PRO_0000187080" description="Putative clathrin assembly protein At2g01920">
    <location>
        <begin position="1"/>
        <end position="312"/>
    </location>
</feature>
<feature type="domain" description="ENTH" evidence="2">
    <location>
        <begin position="21"/>
        <end position="152"/>
    </location>
</feature>
<organism>
    <name type="scientific">Arabidopsis thaliana</name>
    <name type="common">Mouse-ear cress</name>
    <dbReference type="NCBI Taxonomy" id="3702"/>
    <lineage>
        <taxon>Eukaryota</taxon>
        <taxon>Viridiplantae</taxon>
        <taxon>Streptophyta</taxon>
        <taxon>Embryophyta</taxon>
        <taxon>Tracheophyta</taxon>
        <taxon>Spermatophyta</taxon>
        <taxon>Magnoliopsida</taxon>
        <taxon>eudicotyledons</taxon>
        <taxon>Gunneridae</taxon>
        <taxon>Pentapetalae</taxon>
        <taxon>rosids</taxon>
        <taxon>malvids</taxon>
        <taxon>Brassicales</taxon>
        <taxon>Brassicaceae</taxon>
        <taxon>Camelineae</taxon>
        <taxon>Arabidopsis</taxon>
    </lineage>
</organism>
<evidence type="ECO:0000250" key="1"/>
<evidence type="ECO:0000255" key="2">
    <source>
        <dbReference type="PROSITE-ProRule" id="PRU00243"/>
    </source>
</evidence>
<comment type="subcellular location">
    <subcellularLocation>
        <location evidence="1">Membrane</location>
        <location evidence="1">Clathrin-coated pit</location>
    </subcellularLocation>
    <subcellularLocation>
        <location evidence="1">Golgi apparatus</location>
    </subcellularLocation>
    <subcellularLocation>
        <location evidence="1">Cytoplasmic vesicle</location>
        <location evidence="1">Clathrin-coated vesicle</location>
    </subcellularLocation>
    <text evidence="1">Colocalized with clathrin in the Golgi area.</text>
</comment>
<reference key="1">
    <citation type="journal article" date="1999" name="Nature">
        <title>Sequence and analysis of chromosome 2 of the plant Arabidopsis thaliana.</title>
        <authorList>
            <person name="Lin X."/>
            <person name="Kaul S."/>
            <person name="Rounsley S.D."/>
            <person name="Shea T.P."/>
            <person name="Benito M.-I."/>
            <person name="Town C.D."/>
            <person name="Fujii C.Y."/>
            <person name="Mason T.M."/>
            <person name="Bowman C.L."/>
            <person name="Barnstead M.E."/>
            <person name="Feldblyum T.V."/>
            <person name="Buell C.R."/>
            <person name="Ketchum K.A."/>
            <person name="Lee J.J."/>
            <person name="Ronning C.M."/>
            <person name="Koo H.L."/>
            <person name="Moffat K.S."/>
            <person name="Cronin L.A."/>
            <person name="Shen M."/>
            <person name="Pai G."/>
            <person name="Van Aken S."/>
            <person name="Umayam L."/>
            <person name="Tallon L.J."/>
            <person name="Gill J.E."/>
            <person name="Adams M.D."/>
            <person name="Carrera A.J."/>
            <person name="Creasy T.H."/>
            <person name="Goodman H.M."/>
            <person name="Somerville C.R."/>
            <person name="Copenhaver G.P."/>
            <person name="Preuss D."/>
            <person name="Nierman W.C."/>
            <person name="White O."/>
            <person name="Eisen J.A."/>
            <person name="Salzberg S.L."/>
            <person name="Fraser C.M."/>
            <person name="Venter J.C."/>
        </authorList>
    </citation>
    <scope>NUCLEOTIDE SEQUENCE [LARGE SCALE GENOMIC DNA]</scope>
    <source>
        <strain>cv. Columbia</strain>
    </source>
</reference>
<reference key="2">
    <citation type="journal article" date="2017" name="Plant J.">
        <title>Araport11: a complete reannotation of the Arabidopsis thaliana reference genome.</title>
        <authorList>
            <person name="Cheng C.Y."/>
            <person name="Krishnakumar V."/>
            <person name="Chan A.P."/>
            <person name="Thibaud-Nissen F."/>
            <person name="Schobel S."/>
            <person name="Town C.D."/>
        </authorList>
    </citation>
    <scope>GENOME REANNOTATION</scope>
    <source>
        <strain>cv. Columbia</strain>
    </source>
</reference>
<reference key="3">
    <citation type="submission" date="2005-05" db="EMBL/GenBank/DDBJ databases">
        <authorList>
            <person name="Underwood B.A."/>
            <person name="Xiao Y.-L."/>
            <person name="Moskal W.A. Jr."/>
            <person name="Monaghan E.L."/>
            <person name="Wang W."/>
            <person name="Redman J.C."/>
            <person name="Wu H.C."/>
            <person name="Utterback T."/>
            <person name="Town C.D."/>
        </authorList>
    </citation>
    <scope>NUCLEOTIDE SEQUENCE [LARGE SCALE MRNA]</scope>
    <source>
        <strain>cv. Columbia</strain>
    </source>
</reference>
<keyword id="KW-0168">Coated pit</keyword>
<keyword id="KW-0968">Cytoplasmic vesicle</keyword>
<keyword id="KW-0254">Endocytosis</keyword>
<keyword id="KW-0333">Golgi apparatus</keyword>
<keyword id="KW-0472">Membrane</keyword>
<keyword id="KW-1185">Reference proteome</keyword>
<accession>Q9SHV5</accession>
<accession>Q4PSW4</accession>